<proteinExistence type="inferred from homology"/>
<protein>
    <recommendedName>
        <fullName evidence="1">Small ribosomal subunit protein uS2c</fullName>
    </recommendedName>
    <alternativeName>
        <fullName>30S ribosomal protein S2, chloroplastic</fullName>
    </alternativeName>
</protein>
<organism>
    <name type="scientific">Acorus calamus var. americanus</name>
    <name type="common">American sweet flag</name>
    <name type="synonym">Acorus americanus</name>
    <dbReference type="NCBI Taxonomy" id="263995"/>
    <lineage>
        <taxon>Eukaryota</taxon>
        <taxon>Viridiplantae</taxon>
        <taxon>Streptophyta</taxon>
        <taxon>Embryophyta</taxon>
        <taxon>Tracheophyta</taxon>
        <taxon>Spermatophyta</taxon>
        <taxon>Magnoliopsida</taxon>
        <taxon>Liliopsida</taxon>
        <taxon>Acoraceae</taxon>
        <taxon>Acorus</taxon>
    </lineage>
</organism>
<comment type="subcellular location">
    <subcellularLocation>
        <location>Plastid</location>
        <location>Chloroplast</location>
    </subcellularLocation>
</comment>
<comment type="similarity">
    <text evidence="1">Belongs to the universal ribosomal protein uS2 family.</text>
</comment>
<feature type="chain" id="PRO_0000352084" description="Small ribosomal subunit protein uS2c">
    <location>
        <begin position="1"/>
        <end position="236"/>
    </location>
</feature>
<keyword id="KW-0150">Chloroplast</keyword>
<keyword id="KW-0934">Plastid</keyword>
<keyword id="KW-0687">Ribonucleoprotein</keyword>
<keyword id="KW-0689">Ribosomal protein</keyword>
<dbReference type="EMBL" id="EU273602">
    <property type="protein sequence ID" value="ABX38733.1"/>
    <property type="molecule type" value="Genomic_DNA"/>
</dbReference>
<dbReference type="RefSeq" id="YP_001586171.1">
    <property type="nucleotide sequence ID" value="NC_010093.1"/>
</dbReference>
<dbReference type="SMR" id="A9LYH4"/>
<dbReference type="GeneID" id="5777725"/>
<dbReference type="GO" id="GO:0009507">
    <property type="term" value="C:chloroplast"/>
    <property type="evidence" value="ECO:0007669"/>
    <property type="project" value="UniProtKB-SubCell"/>
</dbReference>
<dbReference type="GO" id="GO:0005763">
    <property type="term" value="C:mitochondrial small ribosomal subunit"/>
    <property type="evidence" value="ECO:0007669"/>
    <property type="project" value="TreeGrafter"/>
</dbReference>
<dbReference type="GO" id="GO:0003735">
    <property type="term" value="F:structural constituent of ribosome"/>
    <property type="evidence" value="ECO:0007669"/>
    <property type="project" value="InterPro"/>
</dbReference>
<dbReference type="GO" id="GO:0006412">
    <property type="term" value="P:translation"/>
    <property type="evidence" value="ECO:0007669"/>
    <property type="project" value="UniProtKB-UniRule"/>
</dbReference>
<dbReference type="CDD" id="cd01425">
    <property type="entry name" value="RPS2"/>
    <property type="match status" value="1"/>
</dbReference>
<dbReference type="FunFam" id="3.40.50.10490:FF:000101">
    <property type="match status" value="1"/>
</dbReference>
<dbReference type="FunFam" id="1.10.287.610:FF:000001">
    <property type="entry name" value="30S ribosomal protein S2"/>
    <property type="match status" value="1"/>
</dbReference>
<dbReference type="Gene3D" id="3.40.50.10490">
    <property type="entry name" value="Glucose-6-phosphate isomerase like protein, domain 1"/>
    <property type="match status" value="1"/>
</dbReference>
<dbReference type="Gene3D" id="1.10.287.610">
    <property type="entry name" value="Helix hairpin bin"/>
    <property type="match status" value="1"/>
</dbReference>
<dbReference type="HAMAP" id="MF_00291_B">
    <property type="entry name" value="Ribosomal_uS2_B"/>
    <property type="match status" value="1"/>
</dbReference>
<dbReference type="InterPro" id="IPR001865">
    <property type="entry name" value="Ribosomal_uS2"/>
</dbReference>
<dbReference type="InterPro" id="IPR005706">
    <property type="entry name" value="Ribosomal_uS2_bac/mit/plastid"/>
</dbReference>
<dbReference type="InterPro" id="IPR018130">
    <property type="entry name" value="Ribosomal_uS2_CS"/>
</dbReference>
<dbReference type="InterPro" id="IPR023591">
    <property type="entry name" value="Ribosomal_uS2_flav_dom_sf"/>
</dbReference>
<dbReference type="NCBIfam" id="TIGR01011">
    <property type="entry name" value="rpsB_bact"/>
    <property type="match status" value="1"/>
</dbReference>
<dbReference type="PANTHER" id="PTHR12534">
    <property type="entry name" value="30S RIBOSOMAL PROTEIN S2 PROKARYOTIC AND ORGANELLAR"/>
    <property type="match status" value="1"/>
</dbReference>
<dbReference type="PANTHER" id="PTHR12534:SF0">
    <property type="entry name" value="SMALL RIBOSOMAL SUBUNIT PROTEIN US2M"/>
    <property type="match status" value="1"/>
</dbReference>
<dbReference type="Pfam" id="PF00318">
    <property type="entry name" value="Ribosomal_S2"/>
    <property type="match status" value="1"/>
</dbReference>
<dbReference type="PRINTS" id="PR00395">
    <property type="entry name" value="RIBOSOMALS2"/>
</dbReference>
<dbReference type="SUPFAM" id="SSF52313">
    <property type="entry name" value="Ribosomal protein S2"/>
    <property type="match status" value="1"/>
</dbReference>
<dbReference type="PROSITE" id="PS00962">
    <property type="entry name" value="RIBOSOMAL_S2_1"/>
    <property type="match status" value="1"/>
</dbReference>
<dbReference type="PROSITE" id="PS00963">
    <property type="entry name" value="RIBOSOMAL_S2_2"/>
    <property type="match status" value="1"/>
</dbReference>
<accession>A9LYH4</accession>
<name>RR2_ACOCI</name>
<gene>
    <name type="primary">rps2</name>
</gene>
<geneLocation type="chloroplast"/>
<reference key="1">
    <citation type="submission" date="2007-11" db="EMBL/GenBank/DDBJ databases">
        <title>The complete chloroplast genome of Acorus americanus.</title>
        <authorList>
            <person name="Peery R.M."/>
            <person name="Chumley T.W."/>
            <person name="Kuehl J.V."/>
            <person name="Boore J.L."/>
            <person name="Raubeson L.A."/>
        </authorList>
    </citation>
    <scope>NUCLEOTIDE SEQUENCE [LARGE SCALE GENOMIC DNA]</scope>
</reference>
<evidence type="ECO:0000305" key="1"/>
<sequence length="236" mass="26531">MTKRYWNINLEEMMEAGVHFGHGTRKWNPRMAPYISAKRKGIHITNLTRTARFLSEACDLLFDAASGGKHFLIVGTKKKAADSVASAAIRARCHYVNKKWLGGMSTNWSTTETRLQNFRDLRAEQKAGKIDRLPKRDAAMLKRQLSTLQTYLGGIKYMTGLPDIVIIVDQQEDYTALRECVILGIPTICLIDTNSDPDLADISIPANDDAIASIRLILNKLVFAICEGRSSYIRNR</sequence>